<name>ANDF_EMEVA</name>
<accession>A0A097ZPD9</accession>
<organism>
    <name type="scientific">Emericella variicolor</name>
    <name type="common">Aspergillus stellatus</name>
    <dbReference type="NCBI Taxonomy" id="1549217"/>
    <lineage>
        <taxon>Eukaryota</taxon>
        <taxon>Fungi</taxon>
        <taxon>Dikarya</taxon>
        <taxon>Ascomycota</taxon>
        <taxon>Pezizomycotina</taxon>
        <taxon>Eurotiomycetes</taxon>
        <taxon>Eurotiomycetidae</taxon>
        <taxon>Eurotiales</taxon>
        <taxon>Aspergillaceae</taxon>
        <taxon>Aspergillus</taxon>
        <taxon>Aspergillus subgen. Nidulantes</taxon>
    </lineage>
</organism>
<protein>
    <recommendedName>
        <fullName evidence="4">Dioxygenase andF</fullName>
        <ecNumber evidence="3">1.14.11.-</ecNumber>
    </recommendedName>
    <alternativeName>
        <fullName evidence="4">Anditomin synthesis protein F</fullName>
    </alternativeName>
</protein>
<keyword id="KW-0223">Dioxygenase</keyword>
<keyword id="KW-0408">Iron</keyword>
<keyword id="KW-0479">Metal-binding</keyword>
<keyword id="KW-0560">Oxidoreductase</keyword>
<sequence length="285" mass="32447">MTVPQLHYVPYDTPVEDVMRILEECGTLVIRNFLDQKTVQNVQNEVDDYVRNWNPGPKYNHDIKTVGSKTKQPSNLSLMSKTYRCEVLNHPWMHAICERMFGPTYGDYWFNGGSILHLEPGEHTQPIHQDHVFYHISKWRRPTDPDLTINFAMALTEFTVENGGTRVCPGSHLWENGHAPPAEEDMVPALMQPGDALILPGSMWHSAGANRSSEYRRGFAASFHPCHFTPIESHHHLPREMVEEMSPLVQKMLGFRTLNLHNNVKVWKAGEGNLEDATGLKSIAV</sequence>
<dbReference type="EC" id="1.14.11.-" evidence="3"/>
<dbReference type="EMBL" id="AB981314">
    <property type="protein sequence ID" value="BAP81860.1"/>
    <property type="molecule type" value="Genomic_DNA"/>
</dbReference>
<dbReference type="SMR" id="A0A097ZPD9"/>
<dbReference type="BioCyc" id="MetaCyc:MONOMER-19056"/>
<dbReference type="UniPathway" id="UPA00213"/>
<dbReference type="GO" id="GO:0051213">
    <property type="term" value="F:dioxygenase activity"/>
    <property type="evidence" value="ECO:0007669"/>
    <property type="project" value="UniProtKB-KW"/>
</dbReference>
<dbReference type="GO" id="GO:0046872">
    <property type="term" value="F:metal ion binding"/>
    <property type="evidence" value="ECO:0007669"/>
    <property type="project" value="UniProtKB-KW"/>
</dbReference>
<dbReference type="GO" id="GO:0016114">
    <property type="term" value="P:terpenoid biosynthetic process"/>
    <property type="evidence" value="ECO:0007669"/>
    <property type="project" value="UniProtKB-UniPathway"/>
</dbReference>
<dbReference type="Gene3D" id="2.60.120.620">
    <property type="entry name" value="q2cbj1_9rhob like domain"/>
    <property type="match status" value="1"/>
</dbReference>
<dbReference type="InterPro" id="IPR008775">
    <property type="entry name" value="Phytyl_CoA_dOase-like"/>
</dbReference>
<dbReference type="PANTHER" id="PTHR20883:SF48">
    <property type="entry name" value="ECTOINE DIOXYGENASE"/>
    <property type="match status" value="1"/>
</dbReference>
<dbReference type="PANTHER" id="PTHR20883">
    <property type="entry name" value="PHYTANOYL-COA DIOXYGENASE DOMAIN CONTAINING 1"/>
    <property type="match status" value="1"/>
</dbReference>
<dbReference type="Pfam" id="PF05721">
    <property type="entry name" value="PhyH"/>
    <property type="match status" value="1"/>
</dbReference>
<dbReference type="SUPFAM" id="SSF51197">
    <property type="entry name" value="Clavaminate synthase-like"/>
    <property type="match status" value="1"/>
</dbReference>
<gene>
    <name evidence="4" type="primary">andF</name>
</gene>
<proteinExistence type="evidence at protein level"/>
<reference key="1">
    <citation type="journal article" date="2014" name="J. Am. Chem. Soc.">
        <title>Complete biosynthetic pathway of anditomin: nature's sophisticated synthetic route to a complex fungal meroterpenoid.</title>
        <authorList>
            <person name="Matsuda Y."/>
            <person name="Wakimoto T."/>
            <person name="Mori T."/>
            <person name="Awakawa T."/>
            <person name="Abe I."/>
        </authorList>
    </citation>
    <scope>NUCLEOTIDE SEQUENCE [GENOMIC DNA]</scope>
    <scope>FUNCTION</scope>
    <scope>DISRUPTION PHENOTYPE</scope>
    <scope>CATALYTIC ACTIVITY</scope>
    <scope>COFACTOR</scope>
    <source>
        <strain>ATCC 12069 / CBS 136.55 / IMI 60316 / NBRC 32302</strain>
    </source>
</reference>
<feature type="chain" id="PRO_0000436582" description="Dioxygenase andF">
    <location>
        <begin position="1"/>
        <end position="285"/>
    </location>
</feature>
<feature type="binding site" evidence="1">
    <location>
        <position position="128"/>
    </location>
    <ligand>
        <name>Fe cation</name>
        <dbReference type="ChEBI" id="CHEBI:24875"/>
    </ligand>
</feature>
<feature type="binding site" evidence="1">
    <location>
        <position position="130"/>
    </location>
    <ligand>
        <name>Fe cation</name>
        <dbReference type="ChEBI" id="CHEBI:24875"/>
    </ligand>
</feature>
<feature type="binding site" evidence="1">
    <location>
        <position position="205"/>
    </location>
    <ligand>
        <name>Fe cation</name>
        <dbReference type="ChEBI" id="CHEBI:24875"/>
    </ligand>
</feature>
<comment type="function">
    <text evidence="3">Dioxygenase; part of the gene cluster that mediates the biosynthesis of anditomin, a fungal meroterpenoid (PubMed:25216349). The first step of the pathway is the synthesis of 3,5-dimethylorsellinic acid (DMOA) by the polyketide synthase andM (PubMed:25216349). DMOA is then converted to the phthalide compound 5,7-dihydroxy-4,6-dimethylphthalide (DHDMP) by the cytochrome P450 monooxygenase andK, which is further prenylated by the prenyltransferase andD to yield farnesyl-DHDMP (PubMed:25216349). Further epoxidation by the FAD-dependent monooxygenase andE leads to epoxyfarnesyl-DHDMP (PubMed:25216349). The next step involves the terpene cyclase andB that converts epoxyfarnesyl-DHDMP into preandiloid A through opening of the epoxide ring followed by the cyclization of the farnesyl moiety (PubMed:25216349). Preandiloid A is in turn oxidized at the C-3 hydroxyl group to yield preandiloid B by the dehydrogenase andC (PubMed:25216349). The dioxygenase andA is solely responsible for the dehydrogenation of preandiloid B leading to the enone preandiloid C, as well as for the intriguing structural rearrangement to generate the bicyclo[2.2.2]octane core, transforming preandiloid C into andiconin (PubMed:25216349). FAD-binding monooxygenase andJ then produces andilesin D which is reduced by dehydrogenase andI to yield andilesin A (PubMed:25216349). Action of acetyltransferase andG followed by a spontaneous acetate elimination leads then to andilesin B, which is in turn substrate of the short chain dehydrogenase andH to yield andilesin C (PubMed:25216349). Finally, the dioxygenase andF catalyzes the transformation of andilesin C to anditomin (PubMed:25216349).</text>
</comment>
<comment type="cofactor">
    <cofactor evidence="3">
        <name>Fe cation</name>
        <dbReference type="ChEBI" id="CHEBI:24875"/>
    </cofactor>
</comment>
<comment type="pathway">
    <text evidence="3">Secondary metabolite biosynthesis; terpenoid biosynthesis.</text>
</comment>
<comment type="subunit">
    <text evidence="2">Homodimer.</text>
</comment>
<comment type="disruption phenotype">
    <text evidence="3">Impairs the synthesis of anditomin but accumulates andilesin A (PubMed:25216349).</text>
</comment>
<comment type="similarity">
    <text evidence="5">Belongs to the PhyH family.</text>
</comment>
<evidence type="ECO:0000250" key="1">
    <source>
        <dbReference type="UniProtKB" id="O14832"/>
    </source>
</evidence>
<evidence type="ECO:0000250" key="2">
    <source>
        <dbReference type="UniProtKB" id="Q4WAW9"/>
    </source>
</evidence>
<evidence type="ECO:0000269" key="3">
    <source>
    </source>
</evidence>
<evidence type="ECO:0000303" key="4">
    <source>
    </source>
</evidence>
<evidence type="ECO:0000305" key="5"/>